<comment type="function">
    <text evidence="1">Involved in countering the first line of host defense mechanisms. Specifically inhibits the response of human neutrophils and monocytes to complement anaphylatoxin C5a and formylated peptides, like N-formyl-methionyl-leucyl-phenylalanine (fMLP). Acts by binding directly to the C5a receptor (C5aR) and formylated peptide receptor (FPR), thereby blocking the C5a- and fMLP-induced calcium responses (By similarity). Prevents phagocytosis of the bacterium.</text>
</comment>
<comment type="subcellular location">
    <subcellularLocation>
        <location evidence="1">Secreted</location>
    </subcellularLocation>
</comment>
<comment type="developmental stage">
    <text evidence="2">Expressed maximally during the exponential growth phase.</text>
</comment>
<comment type="induction">
    <text evidence="2">Up-regulated by sae locus. Down-regulated by SarA and sigma B factor.</text>
</comment>
<comment type="similarity">
    <text evidence="3">Belongs to the CHIPS/FLIPr family.</text>
</comment>
<evidence type="ECO:0000250" key="1"/>
<evidence type="ECO:0000269" key="2">
    <source>
    </source>
</evidence>
<evidence type="ECO:0000305" key="3"/>
<reference key="1">
    <citation type="book" date="2006" name="Gram positive pathogens, 2nd edition">
        <title>The Staphylococcus aureus NCTC 8325 genome.</title>
        <editorList>
            <person name="Fischetti V."/>
            <person name="Novick R."/>
            <person name="Ferretti J."/>
            <person name="Portnoy D."/>
            <person name="Rood J."/>
        </editorList>
        <authorList>
            <person name="Gillaspy A.F."/>
            <person name="Worrell V."/>
            <person name="Orvis J."/>
            <person name="Roe B.A."/>
            <person name="Dyer D.W."/>
            <person name="Iandolo J.J."/>
        </authorList>
    </citation>
    <scope>NUCLEOTIDE SEQUENCE [LARGE SCALE GENOMIC DNA]</scope>
    <source>
        <strain>NCTC 8325 / PS 47</strain>
    </source>
</reference>
<reference key="2">
    <citation type="journal article" date="2006" name="Cell. Microbiol.">
        <title>Early expression of SCIN and CHIPS drives instant immune evasion by Staphylococcus aureus.</title>
        <authorList>
            <person name="Rooijakkers S.H.M."/>
            <person name="Ruyken M."/>
            <person name="van Roon J."/>
            <person name="van Kessel K.P.M."/>
            <person name="van Strijp J.A.G."/>
            <person name="van Wamel W.J.B."/>
        </authorList>
    </citation>
    <scope>CHARACTERIZATION</scope>
    <scope>DEVELOPMENTAL STAGE</scope>
    <scope>INDUCTION</scope>
</reference>
<organism>
    <name type="scientific">Staphylococcus aureus (strain NCTC 8325 / PS 47)</name>
    <dbReference type="NCBI Taxonomy" id="93061"/>
    <lineage>
        <taxon>Bacteria</taxon>
        <taxon>Bacillati</taxon>
        <taxon>Bacillota</taxon>
        <taxon>Bacilli</taxon>
        <taxon>Bacillales</taxon>
        <taxon>Staphylococcaceae</taxon>
        <taxon>Staphylococcus</taxon>
    </lineage>
</organism>
<gene>
    <name type="primary">chp</name>
    <name type="ordered locus">SAOUHSC_02169</name>
</gene>
<dbReference type="EMBL" id="CP000253">
    <property type="protein sequence ID" value="ABD31214.1"/>
    <property type="molecule type" value="Genomic_DNA"/>
</dbReference>
<dbReference type="RefSeq" id="WP_000727643.1">
    <property type="nucleotide sequence ID" value="NZ_LS483365.1"/>
</dbReference>
<dbReference type="RefSeq" id="YP_500656.1">
    <property type="nucleotide sequence ID" value="NC_007795.1"/>
</dbReference>
<dbReference type="BMRB" id="Q2FWV5"/>
<dbReference type="SMR" id="Q2FWV5"/>
<dbReference type="STRING" id="93061.SAOUHSC_02169"/>
<dbReference type="GeneID" id="3921863"/>
<dbReference type="KEGG" id="sao:SAOUHSC_02169"/>
<dbReference type="PATRIC" id="fig|93061.5.peg.1967"/>
<dbReference type="HOGENOM" id="CLU_1748521_0_0_9"/>
<dbReference type="PRO" id="PR:Q2FWV5"/>
<dbReference type="Proteomes" id="UP000008816">
    <property type="component" value="Chromosome"/>
</dbReference>
<dbReference type="GO" id="GO:0005576">
    <property type="term" value="C:extracellular region"/>
    <property type="evidence" value="ECO:0007669"/>
    <property type="project" value="UniProtKB-SubCell"/>
</dbReference>
<dbReference type="Gene3D" id="3.10.20.390">
    <property type="entry name" value="Chemotaxis-inhibiting protein CHIPS"/>
    <property type="match status" value="1"/>
</dbReference>
<dbReference type="InterPro" id="IPR020986">
    <property type="entry name" value="CHIPS"/>
</dbReference>
<dbReference type="InterPro" id="IPR038529">
    <property type="entry name" value="FLIPR/CHIP_sf"/>
</dbReference>
<dbReference type="InterPro" id="IPR023253">
    <property type="entry name" value="FLIPR/CHIPS"/>
</dbReference>
<dbReference type="NCBIfam" id="NF009591">
    <property type="entry name" value="PRK13032.1"/>
    <property type="match status" value="1"/>
</dbReference>
<dbReference type="Pfam" id="PF11434">
    <property type="entry name" value="CHIPS"/>
    <property type="match status" value="1"/>
</dbReference>
<dbReference type="PRINTS" id="PR02036">
    <property type="entry name" value="CHEMOTAXISIP"/>
</dbReference>
<dbReference type="PRINTS" id="PR02035">
    <property type="entry name" value="FLIPRCHIPS"/>
</dbReference>
<feature type="signal peptide" evidence="1">
    <location>
        <begin position="1"/>
        <end position="28"/>
    </location>
</feature>
<feature type="chain" id="PRO_0000319607" description="Chemotaxis inhibitory protein">
    <location>
        <begin position="29"/>
        <end position="149"/>
    </location>
</feature>
<feature type="region of interest" description="FPR-blocking activity" evidence="1">
    <location>
        <begin position="29"/>
        <end position="34"/>
    </location>
</feature>
<feature type="region of interest" description="C5aR-blocking activity" evidence="1">
    <location>
        <begin position="59"/>
        <end position="149"/>
    </location>
</feature>
<keyword id="KW-1185">Reference proteome</keyword>
<keyword id="KW-0964">Secreted</keyword>
<keyword id="KW-0732">Signal</keyword>
<keyword id="KW-0843">Virulence</keyword>
<accession>Q2FWV5</accession>
<proteinExistence type="evidence at protein level"/>
<protein>
    <recommendedName>
        <fullName>Chemotaxis inhibitory protein</fullName>
    </recommendedName>
    <alternativeName>
        <fullName>CHIPS</fullName>
    </alternativeName>
</protein>
<name>CHIPS_STAA8</name>
<sequence length="149" mass="17040">MKKKLATTVLALSFLTAGISTHHHSAKAFTFEPFPTNEEIESNKKLLEKEKAYKESFKNSGLPTTLGKLDERLRNYLKKGTKNSAQFEKMVILTENKGYYTVYLNTPLAEDRKNVELLGKMYKTYFFKKGESKSSYVINGPGKTNEYAY</sequence>